<organism>
    <name type="scientific">Serratia proteamaculans (strain 568)</name>
    <dbReference type="NCBI Taxonomy" id="399741"/>
    <lineage>
        <taxon>Bacteria</taxon>
        <taxon>Pseudomonadati</taxon>
        <taxon>Pseudomonadota</taxon>
        <taxon>Gammaproteobacteria</taxon>
        <taxon>Enterobacterales</taxon>
        <taxon>Yersiniaceae</taxon>
        <taxon>Serratia</taxon>
    </lineage>
</organism>
<protein>
    <recommendedName>
        <fullName evidence="1">Sugar fermentation stimulation protein homolog</fullName>
    </recommendedName>
</protein>
<proteinExistence type="inferred from homology"/>
<dbReference type="EMBL" id="CP000826">
    <property type="protein sequence ID" value="ABV43079.1"/>
    <property type="molecule type" value="Genomic_DNA"/>
</dbReference>
<dbReference type="SMR" id="A8GIY9"/>
<dbReference type="STRING" id="399741.Spro_3984"/>
<dbReference type="KEGG" id="spe:Spro_3984"/>
<dbReference type="eggNOG" id="COG1489">
    <property type="taxonomic scope" value="Bacteria"/>
</dbReference>
<dbReference type="HOGENOM" id="CLU_052299_2_0_6"/>
<dbReference type="OrthoDB" id="9802365at2"/>
<dbReference type="GO" id="GO:0003677">
    <property type="term" value="F:DNA binding"/>
    <property type="evidence" value="ECO:0007669"/>
    <property type="project" value="InterPro"/>
</dbReference>
<dbReference type="CDD" id="cd22359">
    <property type="entry name" value="SfsA-like_bacterial"/>
    <property type="match status" value="1"/>
</dbReference>
<dbReference type="FunFam" id="2.40.50.580:FF:000001">
    <property type="entry name" value="Sugar fermentation stimulation protein A"/>
    <property type="match status" value="1"/>
</dbReference>
<dbReference type="FunFam" id="3.40.1350.60:FF:000001">
    <property type="entry name" value="Sugar fermentation stimulation protein A"/>
    <property type="match status" value="1"/>
</dbReference>
<dbReference type="Gene3D" id="2.40.50.580">
    <property type="match status" value="1"/>
</dbReference>
<dbReference type="Gene3D" id="3.40.1350.60">
    <property type="match status" value="1"/>
</dbReference>
<dbReference type="HAMAP" id="MF_00095">
    <property type="entry name" value="SfsA"/>
    <property type="match status" value="1"/>
</dbReference>
<dbReference type="InterPro" id="IPR005224">
    <property type="entry name" value="SfsA"/>
</dbReference>
<dbReference type="InterPro" id="IPR040452">
    <property type="entry name" value="SfsA_C"/>
</dbReference>
<dbReference type="InterPro" id="IPR041465">
    <property type="entry name" value="SfsA_N"/>
</dbReference>
<dbReference type="NCBIfam" id="TIGR00230">
    <property type="entry name" value="sfsA"/>
    <property type="match status" value="1"/>
</dbReference>
<dbReference type="PANTHER" id="PTHR30545">
    <property type="entry name" value="SUGAR FERMENTATION STIMULATION PROTEIN A"/>
    <property type="match status" value="1"/>
</dbReference>
<dbReference type="PANTHER" id="PTHR30545:SF2">
    <property type="entry name" value="SUGAR FERMENTATION STIMULATION PROTEIN A"/>
    <property type="match status" value="1"/>
</dbReference>
<dbReference type="Pfam" id="PF03749">
    <property type="entry name" value="SfsA"/>
    <property type="match status" value="1"/>
</dbReference>
<dbReference type="Pfam" id="PF17746">
    <property type="entry name" value="SfsA_N"/>
    <property type="match status" value="1"/>
</dbReference>
<evidence type="ECO:0000255" key="1">
    <source>
        <dbReference type="HAMAP-Rule" id="MF_00095"/>
    </source>
</evidence>
<accession>A8GIY9</accession>
<name>SFSA_SERP5</name>
<sequence length="235" mass="26372">MIFSPPLHHATLIKRYKRFLADVITPEGETFTLHCANTGAMTGCATPGDTVWYSTSDNPKRKYAHSWELTHTQQGDWICVNTLRANTLVREAIEQNLVNELSGYSKISSEVKYGSESSRIDLLLQAEDRANCYIEVKSVTLLQQQRGYFPDAVTLRGQKHLRELLSVVESGQRAVLFFAVLHSGIEQVAPAHHIDERYATLLAQVQQLGVEVVCYGAKLSPDGIYLCDKLPFFID</sequence>
<feature type="chain" id="PRO_1000057632" description="Sugar fermentation stimulation protein homolog">
    <location>
        <begin position="1"/>
        <end position="235"/>
    </location>
</feature>
<reference key="1">
    <citation type="submission" date="2007-09" db="EMBL/GenBank/DDBJ databases">
        <title>Complete sequence of chromosome of Serratia proteamaculans 568.</title>
        <authorList>
            <consortium name="US DOE Joint Genome Institute"/>
            <person name="Copeland A."/>
            <person name="Lucas S."/>
            <person name="Lapidus A."/>
            <person name="Barry K."/>
            <person name="Glavina del Rio T."/>
            <person name="Dalin E."/>
            <person name="Tice H."/>
            <person name="Pitluck S."/>
            <person name="Chain P."/>
            <person name="Malfatti S."/>
            <person name="Shin M."/>
            <person name="Vergez L."/>
            <person name="Schmutz J."/>
            <person name="Larimer F."/>
            <person name="Land M."/>
            <person name="Hauser L."/>
            <person name="Kyrpides N."/>
            <person name="Kim E."/>
            <person name="Taghavi S."/>
            <person name="Newman L."/>
            <person name="Vangronsveld J."/>
            <person name="van der Lelie D."/>
            <person name="Richardson P."/>
        </authorList>
    </citation>
    <scope>NUCLEOTIDE SEQUENCE [LARGE SCALE GENOMIC DNA]</scope>
    <source>
        <strain>568</strain>
    </source>
</reference>
<comment type="similarity">
    <text evidence="1">Belongs to the SfsA family.</text>
</comment>
<gene>
    <name evidence="1" type="primary">sfsA</name>
    <name type="ordered locus">Spro_3984</name>
</gene>